<keyword id="KW-0963">Cytoplasm</keyword>
<keyword id="KW-0275">Fatty acid biosynthesis</keyword>
<keyword id="KW-0276">Fatty acid metabolism</keyword>
<keyword id="KW-0444">Lipid biosynthesis</keyword>
<keyword id="KW-0443">Lipid metabolism</keyword>
<keyword id="KW-0596">Phosphopantetheine</keyword>
<keyword id="KW-0597">Phosphoprotein</keyword>
<keyword id="KW-1185">Reference proteome</keyword>
<evidence type="ECO:0000255" key="1">
    <source>
        <dbReference type="HAMAP-Rule" id="MF_01217"/>
    </source>
</evidence>
<evidence type="ECO:0000255" key="2">
    <source>
        <dbReference type="PROSITE-ProRule" id="PRU00258"/>
    </source>
</evidence>
<comment type="function">
    <text evidence="1">Carrier of the growing fatty acid chain in fatty acid biosynthesis.</text>
</comment>
<comment type="pathway">
    <text evidence="1">Lipid metabolism; fatty acid biosynthesis.</text>
</comment>
<comment type="subcellular location">
    <subcellularLocation>
        <location evidence="1">Cytoplasm</location>
    </subcellularLocation>
</comment>
<comment type="PTM">
    <text evidence="1">4'-phosphopantetheine is transferred from CoA to a specific serine of apo-ACP by AcpS. This modification is essential for activity because fatty acids are bound in thioester linkage to the sulfhydryl of the prosthetic group.</text>
</comment>
<comment type="similarity">
    <text evidence="1">Belongs to the acyl carrier protein (ACP) family.</text>
</comment>
<organism>
    <name type="scientific">Treponema pallidum (strain Nichols)</name>
    <dbReference type="NCBI Taxonomy" id="243276"/>
    <lineage>
        <taxon>Bacteria</taxon>
        <taxon>Pseudomonadati</taxon>
        <taxon>Spirochaetota</taxon>
        <taxon>Spirochaetia</taxon>
        <taxon>Spirochaetales</taxon>
        <taxon>Treponemataceae</taxon>
        <taxon>Treponema</taxon>
    </lineage>
</organism>
<accession>O83786</accession>
<reference key="1">
    <citation type="journal article" date="1998" name="Science">
        <title>Complete genome sequence of Treponema pallidum, the syphilis spirochete.</title>
        <authorList>
            <person name="Fraser C.M."/>
            <person name="Norris S.J."/>
            <person name="Weinstock G.M."/>
            <person name="White O."/>
            <person name="Sutton G.G."/>
            <person name="Dodson R.J."/>
            <person name="Gwinn M.L."/>
            <person name="Hickey E.K."/>
            <person name="Clayton R.A."/>
            <person name="Ketchum K.A."/>
            <person name="Sodergren E."/>
            <person name="Hardham J.M."/>
            <person name="McLeod M.P."/>
            <person name="Salzberg S.L."/>
            <person name="Peterson J.D."/>
            <person name="Khalak H.G."/>
            <person name="Richardson D.L."/>
            <person name="Howell J.K."/>
            <person name="Chidambaram M."/>
            <person name="Utterback T.R."/>
            <person name="McDonald L.A."/>
            <person name="Artiach P."/>
            <person name="Bowman C."/>
            <person name="Cotton M.D."/>
            <person name="Fujii C."/>
            <person name="Garland S.A."/>
            <person name="Hatch B."/>
            <person name="Horst K."/>
            <person name="Roberts K.M."/>
            <person name="Sandusky M."/>
            <person name="Weidman J.F."/>
            <person name="Smith H.O."/>
            <person name="Venter J.C."/>
        </authorList>
    </citation>
    <scope>NUCLEOTIDE SEQUENCE [LARGE SCALE GENOMIC DNA]</scope>
    <source>
        <strain>Nichols</strain>
    </source>
</reference>
<proteinExistence type="inferred from homology"/>
<dbReference type="EMBL" id="AE000520">
    <property type="protein sequence ID" value="AAC65777.1"/>
    <property type="molecule type" value="Genomic_DNA"/>
</dbReference>
<dbReference type="PIR" id="F71277">
    <property type="entry name" value="F71277"/>
</dbReference>
<dbReference type="RefSeq" id="WP_010882253.1">
    <property type="nucleotide sequence ID" value="NC_021490.2"/>
</dbReference>
<dbReference type="SMR" id="O83786"/>
<dbReference type="STRING" id="243276.TP_0808"/>
<dbReference type="EnsemblBacteria" id="AAC65777">
    <property type="protein sequence ID" value="AAC65777"/>
    <property type="gene ID" value="TP_0808"/>
</dbReference>
<dbReference type="GeneID" id="93876569"/>
<dbReference type="KEGG" id="tpa:TP_0808"/>
<dbReference type="KEGG" id="tpw:TPANIC_0808"/>
<dbReference type="eggNOG" id="COG0236">
    <property type="taxonomic scope" value="Bacteria"/>
</dbReference>
<dbReference type="HOGENOM" id="CLU_108696_5_1_12"/>
<dbReference type="OrthoDB" id="9804551at2"/>
<dbReference type="UniPathway" id="UPA00094"/>
<dbReference type="Proteomes" id="UP000000811">
    <property type="component" value="Chromosome"/>
</dbReference>
<dbReference type="GO" id="GO:0005829">
    <property type="term" value="C:cytosol"/>
    <property type="evidence" value="ECO:0007669"/>
    <property type="project" value="TreeGrafter"/>
</dbReference>
<dbReference type="GO" id="GO:0016020">
    <property type="term" value="C:membrane"/>
    <property type="evidence" value="ECO:0007669"/>
    <property type="project" value="GOC"/>
</dbReference>
<dbReference type="GO" id="GO:0000035">
    <property type="term" value="F:acyl binding"/>
    <property type="evidence" value="ECO:0007669"/>
    <property type="project" value="TreeGrafter"/>
</dbReference>
<dbReference type="GO" id="GO:0000036">
    <property type="term" value="F:acyl carrier activity"/>
    <property type="evidence" value="ECO:0007669"/>
    <property type="project" value="UniProtKB-UniRule"/>
</dbReference>
<dbReference type="GO" id="GO:0009245">
    <property type="term" value="P:lipid A biosynthetic process"/>
    <property type="evidence" value="ECO:0007669"/>
    <property type="project" value="TreeGrafter"/>
</dbReference>
<dbReference type="Gene3D" id="1.10.1200.10">
    <property type="entry name" value="ACP-like"/>
    <property type="match status" value="1"/>
</dbReference>
<dbReference type="HAMAP" id="MF_01217">
    <property type="entry name" value="Acyl_carrier"/>
    <property type="match status" value="1"/>
</dbReference>
<dbReference type="InterPro" id="IPR003231">
    <property type="entry name" value="ACP"/>
</dbReference>
<dbReference type="InterPro" id="IPR036736">
    <property type="entry name" value="ACP-like_sf"/>
</dbReference>
<dbReference type="InterPro" id="IPR009081">
    <property type="entry name" value="PP-bd_ACP"/>
</dbReference>
<dbReference type="NCBIfam" id="TIGR00517">
    <property type="entry name" value="acyl_carrier"/>
    <property type="match status" value="1"/>
</dbReference>
<dbReference type="NCBIfam" id="NF002148">
    <property type="entry name" value="PRK00982.1-2"/>
    <property type="match status" value="1"/>
</dbReference>
<dbReference type="NCBIfam" id="NF002150">
    <property type="entry name" value="PRK00982.1-4"/>
    <property type="match status" value="1"/>
</dbReference>
<dbReference type="PANTHER" id="PTHR20863">
    <property type="entry name" value="ACYL CARRIER PROTEIN"/>
    <property type="match status" value="1"/>
</dbReference>
<dbReference type="PANTHER" id="PTHR20863:SF76">
    <property type="entry name" value="CARRIER DOMAIN-CONTAINING PROTEIN"/>
    <property type="match status" value="1"/>
</dbReference>
<dbReference type="Pfam" id="PF00550">
    <property type="entry name" value="PP-binding"/>
    <property type="match status" value="1"/>
</dbReference>
<dbReference type="SUPFAM" id="SSF47336">
    <property type="entry name" value="ACP-like"/>
    <property type="match status" value="1"/>
</dbReference>
<dbReference type="PROSITE" id="PS50075">
    <property type="entry name" value="CARRIER"/>
    <property type="match status" value="1"/>
</dbReference>
<name>ACP_TREPA</name>
<sequence>MDELFLRMRALVAEKLEVEEASITLDSSFRGDLGADSLDTYELVYAIEEEMGITIPDEKANEFETVRDAYEFIKSKVT</sequence>
<protein>
    <recommendedName>
        <fullName evidence="1">Acyl carrier protein</fullName>
        <shortName evidence="1">ACP</shortName>
    </recommendedName>
</protein>
<feature type="chain" id="PRO_0000180210" description="Acyl carrier protein">
    <location>
        <begin position="1"/>
        <end position="78"/>
    </location>
</feature>
<feature type="domain" description="Carrier" evidence="2">
    <location>
        <begin position="2"/>
        <end position="77"/>
    </location>
</feature>
<feature type="modified residue" description="O-(pantetheine 4'-phosphoryl)serine" evidence="2">
    <location>
        <position position="37"/>
    </location>
</feature>
<gene>
    <name evidence="1" type="primary">acpP</name>
    <name type="ordered locus">TP_0808</name>
</gene>